<keyword id="KW-0004">4Fe-4S</keyword>
<keyword id="KW-0067">ATP-binding</keyword>
<keyword id="KW-0077">Bacteriochlorophyll biosynthesis</keyword>
<keyword id="KW-0149">Chlorophyll biosynthesis</keyword>
<keyword id="KW-0408">Iron</keyword>
<keyword id="KW-0411">Iron-sulfur</keyword>
<keyword id="KW-0479">Metal-binding</keyword>
<keyword id="KW-0547">Nucleotide-binding</keyword>
<keyword id="KW-0560">Oxidoreductase</keyword>
<keyword id="KW-0602">Photosynthesis</keyword>
<keyword id="KW-1185">Reference proteome</keyword>
<comment type="function">
    <text evidence="1">Component of the dark-operative protochlorophyllide reductase (DPOR) that uses Mg-ATP and reduced ferredoxin to reduce ring D of protochlorophyllide (Pchlide) to form chlorophyllide a (Chlide). This reaction is light-independent. The NB-protein (BchN-BchB) is the catalytic component of the complex.</text>
</comment>
<comment type="catalytic activity">
    <reaction evidence="1">
        <text>chlorophyllide a + oxidized 2[4Fe-4S]-[ferredoxin] + 2 ADP + 2 phosphate = protochlorophyllide a + reduced 2[4Fe-4S]-[ferredoxin] + 2 ATP + 2 H2O</text>
        <dbReference type="Rhea" id="RHEA:28202"/>
        <dbReference type="Rhea" id="RHEA-COMP:10002"/>
        <dbReference type="Rhea" id="RHEA-COMP:10004"/>
        <dbReference type="ChEBI" id="CHEBI:15377"/>
        <dbReference type="ChEBI" id="CHEBI:30616"/>
        <dbReference type="ChEBI" id="CHEBI:33722"/>
        <dbReference type="ChEBI" id="CHEBI:33723"/>
        <dbReference type="ChEBI" id="CHEBI:43474"/>
        <dbReference type="ChEBI" id="CHEBI:83348"/>
        <dbReference type="ChEBI" id="CHEBI:83350"/>
        <dbReference type="ChEBI" id="CHEBI:456216"/>
        <dbReference type="EC" id="1.3.7.7"/>
    </reaction>
</comment>
<comment type="cofactor">
    <cofactor evidence="1">
        <name>[4Fe-4S] cluster</name>
        <dbReference type="ChEBI" id="CHEBI:49883"/>
    </cofactor>
    <text evidence="1">Binds 1 [4Fe-4S] cluster per heterodimer. The cluster is bound at the heterodimer interface by residues from both subunits.</text>
</comment>
<comment type="pathway">
    <text evidence="1">Porphyrin-containing compound metabolism; bacteriochlorophyll biosynthesis (light-independent).</text>
</comment>
<comment type="subunit">
    <text evidence="1">Protochlorophyllide reductase is composed of three subunits; BchL, BchN and BchB. Forms a heterotetramer of two BchB and two BchN subunits.</text>
</comment>
<comment type="similarity">
    <text evidence="1">Belongs to the ChlB/BchB/BchZ family.</text>
</comment>
<organism>
    <name type="scientific">Chlorobium phaeobacteroides (strain DSM 266 / SMG 266 / 2430)</name>
    <dbReference type="NCBI Taxonomy" id="290317"/>
    <lineage>
        <taxon>Bacteria</taxon>
        <taxon>Pseudomonadati</taxon>
        <taxon>Chlorobiota</taxon>
        <taxon>Chlorobiia</taxon>
        <taxon>Chlorobiales</taxon>
        <taxon>Chlorobiaceae</taxon>
        <taxon>Chlorobium/Pelodictyon group</taxon>
        <taxon>Chlorobium</taxon>
    </lineage>
</organism>
<dbReference type="EC" id="1.3.7.7" evidence="1"/>
<dbReference type="EMBL" id="CP000492">
    <property type="protein sequence ID" value="ABL66375.1"/>
    <property type="molecule type" value="Genomic_DNA"/>
</dbReference>
<dbReference type="RefSeq" id="WP_011746158.1">
    <property type="nucleotide sequence ID" value="NC_008639.1"/>
</dbReference>
<dbReference type="SMR" id="A1BIZ8"/>
<dbReference type="STRING" id="290317.Cpha266_2387"/>
<dbReference type="KEGG" id="cph:Cpha266_2387"/>
<dbReference type="eggNOG" id="COG2710">
    <property type="taxonomic scope" value="Bacteria"/>
</dbReference>
<dbReference type="HOGENOM" id="CLU_025470_0_0_10"/>
<dbReference type="OrthoDB" id="5717231at2"/>
<dbReference type="UniPathway" id="UPA00671"/>
<dbReference type="Proteomes" id="UP000008701">
    <property type="component" value="Chromosome"/>
</dbReference>
<dbReference type="GO" id="GO:0051539">
    <property type="term" value="F:4 iron, 4 sulfur cluster binding"/>
    <property type="evidence" value="ECO:0007669"/>
    <property type="project" value="UniProtKB-UniRule"/>
</dbReference>
<dbReference type="GO" id="GO:0005524">
    <property type="term" value="F:ATP binding"/>
    <property type="evidence" value="ECO:0007669"/>
    <property type="project" value="UniProtKB-UniRule"/>
</dbReference>
<dbReference type="GO" id="GO:0046872">
    <property type="term" value="F:metal ion binding"/>
    <property type="evidence" value="ECO:0007669"/>
    <property type="project" value="UniProtKB-KW"/>
</dbReference>
<dbReference type="GO" id="GO:0016730">
    <property type="term" value="F:oxidoreductase activity, acting on iron-sulfur proteins as donors"/>
    <property type="evidence" value="ECO:0007669"/>
    <property type="project" value="InterPro"/>
</dbReference>
<dbReference type="GO" id="GO:0016636">
    <property type="term" value="F:oxidoreductase activity, acting on the CH-CH group of donors, iron-sulfur protein as acceptor"/>
    <property type="evidence" value="ECO:0007669"/>
    <property type="project" value="UniProtKB-UniRule"/>
</dbReference>
<dbReference type="GO" id="GO:0036070">
    <property type="term" value="P:light-independent bacteriochlorophyll biosynthetic process"/>
    <property type="evidence" value="ECO:0007669"/>
    <property type="project" value="UniProtKB-UniRule"/>
</dbReference>
<dbReference type="GO" id="GO:0019685">
    <property type="term" value="P:photosynthesis, dark reaction"/>
    <property type="evidence" value="ECO:0007669"/>
    <property type="project" value="InterPro"/>
</dbReference>
<dbReference type="Gene3D" id="1.20.89.20">
    <property type="match status" value="1"/>
</dbReference>
<dbReference type="Gene3D" id="3.40.50.1980">
    <property type="entry name" value="Nitrogenase molybdenum iron protein domain"/>
    <property type="match status" value="3"/>
</dbReference>
<dbReference type="Gene3D" id="1.10.8.550">
    <property type="entry name" value="Proto-chlorophyllide reductase 57 kD subunit B"/>
    <property type="match status" value="1"/>
</dbReference>
<dbReference type="HAMAP" id="MF_00353">
    <property type="entry name" value="ChlB_BchB"/>
    <property type="match status" value="1"/>
</dbReference>
<dbReference type="InterPro" id="IPR050152">
    <property type="entry name" value="ChlB/BchB/BchZ"/>
</dbReference>
<dbReference type="InterPro" id="IPR013580">
    <property type="entry name" value="LI-POR_suB-like_C"/>
</dbReference>
<dbReference type="InterPro" id="IPR000510">
    <property type="entry name" value="Nase/OxRdtase_comp1"/>
</dbReference>
<dbReference type="InterPro" id="IPR042298">
    <property type="entry name" value="P-CP_red_C"/>
</dbReference>
<dbReference type="InterPro" id="IPR005969">
    <property type="entry name" value="Protochl_reductB"/>
</dbReference>
<dbReference type="InterPro" id="IPR016209">
    <property type="entry name" value="Protochlorophyllide_Rdtase"/>
</dbReference>
<dbReference type="NCBIfam" id="TIGR01278">
    <property type="entry name" value="DPOR_BchB"/>
    <property type="match status" value="1"/>
</dbReference>
<dbReference type="NCBIfam" id="NF002789">
    <property type="entry name" value="PRK02910.1-3"/>
    <property type="match status" value="1"/>
</dbReference>
<dbReference type="PANTHER" id="PTHR33712">
    <property type="entry name" value="LIGHT-INDEPENDENT PROTOCHLOROPHYLLIDE REDUCTASE SUBUNIT B"/>
    <property type="match status" value="1"/>
</dbReference>
<dbReference type="PANTHER" id="PTHR33712:SF7">
    <property type="entry name" value="LIGHT-INDEPENDENT PROTOCHLOROPHYLLIDE REDUCTASE SUBUNIT B"/>
    <property type="match status" value="1"/>
</dbReference>
<dbReference type="Pfam" id="PF00148">
    <property type="entry name" value="Oxidored_nitro"/>
    <property type="match status" value="1"/>
</dbReference>
<dbReference type="Pfam" id="PF08369">
    <property type="entry name" value="PCP_red"/>
    <property type="match status" value="1"/>
</dbReference>
<dbReference type="PIRSF" id="PIRSF000163">
    <property type="entry name" value="PCP_ChlB"/>
    <property type="match status" value="1"/>
</dbReference>
<dbReference type="SUPFAM" id="SSF53807">
    <property type="entry name" value="Helical backbone' metal receptor"/>
    <property type="match status" value="1"/>
</dbReference>
<reference key="1">
    <citation type="submission" date="2006-12" db="EMBL/GenBank/DDBJ databases">
        <title>Complete sequence of Chlorobium phaeobacteroides DSM 266.</title>
        <authorList>
            <consortium name="US DOE Joint Genome Institute"/>
            <person name="Copeland A."/>
            <person name="Lucas S."/>
            <person name="Lapidus A."/>
            <person name="Barry K."/>
            <person name="Detter J.C."/>
            <person name="Glavina del Rio T."/>
            <person name="Hammon N."/>
            <person name="Israni S."/>
            <person name="Pitluck S."/>
            <person name="Goltsman E."/>
            <person name="Schmutz J."/>
            <person name="Larimer F."/>
            <person name="Land M."/>
            <person name="Hauser L."/>
            <person name="Mikhailova N."/>
            <person name="Li T."/>
            <person name="Overmann J."/>
            <person name="Bryant D.A."/>
            <person name="Richardson P."/>
        </authorList>
    </citation>
    <scope>NUCLEOTIDE SEQUENCE [LARGE SCALE GENOMIC DNA]</scope>
    <source>
        <strain>DSM 266 / SMG 266 / 2430</strain>
    </source>
</reference>
<name>BCHB_CHLPD</name>
<gene>
    <name evidence="1" type="primary">bchB</name>
    <name type="ordered locus">Cpha266_2387</name>
</gene>
<feature type="chain" id="PRO_1000048401" description="Light-independent protochlorophyllide reductase subunit B">
    <location>
        <begin position="1"/>
        <end position="535"/>
    </location>
</feature>
<feature type="region of interest" description="Disordered" evidence="2">
    <location>
        <begin position="447"/>
        <end position="483"/>
    </location>
</feature>
<feature type="active site" description="Proton donor" evidence="1">
    <location>
        <position position="292"/>
    </location>
</feature>
<feature type="binding site" evidence="1">
    <location>
        <position position="36"/>
    </location>
    <ligand>
        <name>[4Fe-4S] cluster</name>
        <dbReference type="ChEBI" id="CHEBI:49883"/>
        <note>ligand shared with heterodimeric partner</note>
    </ligand>
</feature>
<feature type="binding site" evidence="1">
    <location>
        <begin position="428"/>
        <end position="429"/>
    </location>
    <ligand>
        <name>substrate</name>
    </ligand>
</feature>
<evidence type="ECO:0000255" key="1">
    <source>
        <dbReference type="HAMAP-Rule" id="MF_00353"/>
    </source>
</evidence>
<evidence type="ECO:0000256" key="2">
    <source>
        <dbReference type="SAM" id="MobiDB-lite"/>
    </source>
</evidence>
<proteinExistence type="inferred from homology"/>
<accession>A1BIZ8</accession>
<protein>
    <recommendedName>
        <fullName evidence="1">Light-independent protochlorophyllide reductase subunit B</fullName>
        <shortName evidence="1">DPOR subunit B</shortName>
        <shortName evidence="1">LI-POR subunit B</shortName>
        <ecNumber evidence="1">1.3.7.7</ecNumber>
    </recommendedName>
</protein>
<sequence>MRLAFWLYEGTALHGISRITNSMKGVHTVYHAPQGDDYITATYTMLERTPDFPGLSISVVRGRDLAQGVSRLPSTLQQVDHHYSPDLTVIAPSCSTALLQEDLNQLAAHSGVPSEKLLVYALNPFRVSENEAADGLFTELVKRYAVAQEKTPTPSVNLLGFTSLGFHLRANLTSLRRMLEALGIAVNVVAPWGSGIDDLAKLPAAWLNIAPYREIGATAAAYLDETCGMPAMYEAPIGVEPTTAWLRKLLDEINRIAGQKGLSRLAMPAPRAFSLDGLSAPSGVPWFARTADMESFSNKRAFVFGDATHTVALVKFLRDELGMQIIGAGTYLERHADWVRKELDGYLPGELMVTDRFQDVAKFIDDQMPDLVCGTQMERHSCRKLDVPCMVICPPTHIENHLLGYYPFFGFDGADVIADRVYLSCKLGLEKHLIDFFGDAGLEYEESDDAAKAEPDQPVSNAHGHTESKTVSQGEPIASDEGGISWSDEAETMLKKVPFFVRKKVRKNTEDFALGIGESCVTAEVFRKAKESLGG</sequence>